<organism>
    <name type="scientific">Drosophila persimilis</name>
    <name type="common">Fruit fly</name>
    <dbReference type="NCBI Taxonomy" id="7234"/>
    <lineage>
        <taxon>Eukaryota</taxon>
        <taxon>Metazoa</taxon>
        <taxon>Ecdysozoa</taxon>
        <taxon>Arthropoda</taxon>
        <taxon>Hexapoda</taxon>
        <taxon>Insecta</taxon>
        <taxon>Pterygota</taxon>
        <taxon>Neoptera</taxon>
        <taxon>Endopterygota</taxon>
        <taxon>Diptera</taxon>
        <taxon>Brachycera</taxon>
        <taxon>Muscomorpha</taxon>
        <taxon>Ephydroidea</taxon>
        <taxon>Drosophilidae</taxon>
        <taxon>Drosophila</taxon>
        <taxon>Sophophora</taxon>
    </lineage>
</organism>
<accession>B4H1X9</accession>
<gene>
    <name type="ORF">GL17966</name>
</gene>
<evidence type="ECO:0000255" key="1">
    <source>
        <dbReference type="HAMAP-Rule" id="MF_03043"/>
    </source>
</evidence>
<feature type="chain" id="PRO_0000383938" description="Queuine tRNA-ribosyltransferase accessory subunit 2">
    <location>
        <begin position="1"/>
        <end position="417"/>
    </location>
</feature>
<feature type="binding site" evidence="1">
    <location>
        <position position="324"/>
    </location>
    <ligand>
        <name>Zn(2+)</name>
        <dbReference type="ChEBI" id="CHEBI:29105"/>
    </ligand>
</feature>
<feature type="binding site" evidence="1">
    <location>
        <position position="326"/>
    </location>
    <ligand>
        <name>Zn(2+)</name>
        <dbReference type="ChEBI" id="CHEBI:29105"/>
    </ligand>
</feature>
<feature type="binding site" evidence="1">
    <location>
        <position position="329"/>
    </location>
    <ligand>
        <name>Zn(2+)</name>
        <dbReference type="ChEBI" id="CHEBI:29105"/>
    </ligand>
</feature>
<feature type="binding site" evidence="1">
    <location>
        <position position="355"/>
    </location>
    <ligand>
        <name>Zn(2+)</name>
        <dbReference type="ChEBI" id="CHEBI:29105"/>
    </ligand>
</feature>
<comment type="function">
    <text evidence="1">Non-catalytic subunit of the queuine tRNA-ribosyltransferase (TGT) that catalyzes the base-exchange of a guanine (G) residue with queuine (Q) at position 34 (anticodon wobble position) in tRNAs with GU(N) anticodons (tRNA-Asp, -Asn, -His and -Tyr), resulting in the hypermodified nucleoside queuosine (7-(((4,5-cis-dihydroxy-2-cyclopenten-1-yl)amino)methyl)-7-deazaguanosine).</text>
</comment>
<comment type="cofactor">
    <cofactor evidence="1">
        <name>Zn(2+)</name>
        <dbReference type="ChEBI" id="CHEBI:29105"/>
    </cofactor>
    <text evidence="1">Binds 1 zinc ion per subunit.</text>
</comment>
<comment type="subunit">
    <text evidence="1">Heterodimer of a catalytic subunit and an accessory subunit.</text>
</comment>
<comment type="subcellular location">
    <subcellularLocation>
        <location evidence="1">Cytoplasm</location>
    </subcellularLocation>
</comment>
<comment type="similarity">
    <text evidence="1">Belongs to the queuine tRNA-ribosyltransferase family. QTRT2 subfamily.</text>
</comment>
<dbReference type="EMBL" id="CH479203">
    <property type="protein sequence ID" value="EDW30331.1"/>
    <property type="molecule type" value="Genomic_DNA"/>
</dbReference>
<dbReference type="SMR" id="B4H1X9"/>
<dbReference type="STRING" id="7234.B4H1X9"/>
<dbReference type="EnsemblMetazoa" id="FBtr0183581">
    <property type="protein sequence ID" value="FBpp0182073"/>
    <property type="gene ID" value="FBgn0155569"/>
</dbReference>
<dbReference type="EnsemblMetazoa" id="XM_002024822.2">
    <property type="protein sequence ID" value="XP_002024858.1"/>
    <property type="gene ID" value="LOC6599839"/>
</dbReference>
<dbReference type="GeneID" id="6599839"/>
<dbReference type="KEGG" id="dpe:6599839"/>
<dbReference type="eggNOG" id="KOG3909">
    <property type="taxonomic scope" value="Eukaryota"/>
</dbReference>
<dbReference type="HOGENOM" id="CLU_037350_0_0_1"/>
<dbReference type="OMA" id="MAGSRMK"/>
<dbReference type="OrthoDB" id="27601at2759"/>
<dbReference type="PhylomeDB" id="B4H1X9"/>
<dbReference type="Proteomes" id="UP000008744">
    <property type="component" value="Unassembled WGS sequence"/>
</dbReference>
<dbReference type="GO" id="GO:0005737">
    <property type="term" value="C:cytoplasm"/>
    <property type="evidence" value="ECO:0007669"/>
    <property type="project" value="UniProtKB-SubCell"/>
</dbReference>
<dbReference type="GO" id="GO:0046872">
    <property type="term" value="F:metal ion binding"/>
    <property type="evidence" value="ECO:0007669"/>
    <property type="project" value="UniProtKB-KW"/>
</dbReference>
<dbReference type="GO" id="GO:0008479">
    <property type="term" value="F:tRNA-guanosine(34) queuine transglycosylase activity"/>
    <property type="evidence" value="ECO:0007669"/>
    <property type="project" value="UniProtKB-UniRule"/>
</dbReference>
<dbReference type="GO" id="GO:0101030">
    <property type="term" value="P:tRNA-guanine transglycosylation"/>
    <property type="evidence" value="ECO:0007669"/>
    <property type="project" value="UniProtKB-UniRule"/>
</dbReference>
<dbReference type="FunFam" id="3.20.20.105:FF:000008">
    <property type="entry name" value="Queuine tRNA-ribosyltransferase accessory subunit 2"/>
    <property type="match status" value="1"/>
</dbReference>
<dbReference type="Gene3D" id="3.20.20.105">
    <property type="entry name" value="Queuine tRNA-ribosyltransferase-like"/>
    <property type="match status" value="1"/>
</dbReference>
<dbReference type="HAMAP" id="MF_03043">
    <property type="entry name" value="QTRT2"/>
    <property type="match status" value="1"/>
</dbReference>
<dbReference type="InterPro" id="IPR028592">
    <property type="entry name" value="QTRTD1"/>
</dbReference>
<dbReference type="InterPro" id="IPR050852">
    <property type="entry name" value="Queuine_tRNA-ribosyltrfase"/>
</dbReference>
<dbReference type="InterPro" id="IPR036511">
    <property type="entry name" value="TGT-like_sf"/>
</dbReference>
<dbReference type="InterPro" id="IPR002616">
    <property type="entry name" value="tRNA_ribo_trans-like"/>
</dbReference>
<dbReference type="NCBIfam" id="TIGR00449">
    <property type="entry name" value="tgt_general"/>
    <property type="match status" value="1"/>
</dbReference>
<dbReference type="PANTHER" id="PTHR46064">
    <property type="entry name" value="QUEUINE TRNA-RIBOSYLTRANSFERASE ACCESSORY SUBUNIT 2"/>
    <property type="match status" value="1"/>
</dbReference>
<dbReference type="PANTHER" id="PTHR46064:SF1">
    <property type="entry name" value="QUEUINE TRNA-RIBOSYLTRANSFERASE ACCESSORY SUBUNIT 2"/>
    <property type="match status" value="1"/>
</dbReference>
<dbReference type="Pfam" id="PF01702">
    <property type="entry name" value="TGT"/>
    <property type="match status" value="1"/>
</dbReference>
<dbReference type="SUPFAM" id="SSF51713">
    <property type="entry name" value="tRNA-guanine transglycosylase"/>
    <property type="match status" value="1"/>
</dbReference>
<reference key="1">
    <citation type="journal article" date="2007" name="Nature">
        <title>Evolution of genes and genomes on the Drosophila phylogeny.</title>
        <authorList>
            <consortium name="Drosophila 12 genomes consortium"/>
        </authorList>
    </citation>
    <scope>NUCLEOTIDE SEQUENCE [LARGE SCALE GENOMIC DNA]</scope>
    <source>
        <strain>MSH-3 / Tucson 14011-0111.49</strain>
    </source>
</reference>
<protein>
    <recommendedName>
        <fullName evidence="1">Queuine tRNA-ribosyltransferase accessory subunit 2</fullName>
    </recommendedName>
    <alternativeName>
        <fullName evidence="1">Queuine tRNA-ribosyltransferase domain-containing protein 1</fullName>
    </alternativeName>
</protein>
<sequence>MKFVIESLTKNSGRLGRLHIKDGAPGQRTPLLMQTTKGGSIPYLSADVFESHVTETPQLLELTLSTIDHMSEALAQFNSADRGLSDYIGFPGHLNVLLLRDPCETTPAGGNDRDIQPLFTRRGKESLSPKRYMEMVASLRPDIYQGLCDADTNAESAKKRVQKSVDRTEKFMHYIYEHKSKVDSTLLAPIVGGYNTFARTQSIKHALEQPSGSYGGYVFEGFHTNGLSATILDASKLLPIVEHCVGQLEEEKPRMVPGAYTPLTTLELIGLGMDLFDTSYAYCAAVNFKALTFTFVQDEVVHVPFLDITDDAIKEDFSPLLKNCVCLSCQKHTRAYVHHLYKTNELLGPILLMVHNLHHYMAFFEAIRESIARDGLPQLTELVRRQNGDSQVDYSIAPNRKVISKATMGKGFAAAAV</sequence>
<keyword id="KW-0963">Cytoplasm</keyword>
<keyword id="KW-0479">Metal-binding</keyword>
<keyword id="KW-1185">Reference proteome</keyword>
<keyword id="KW-0819">tRNA processing</keyword>
<keyword id="KW-0862">Zinc</keyword>
<name>QTRT2_DROPE</name>
<proteinExistence type="inferred from homology"/>